<accession>Q8BDG3</accession>
<name>VL2_BPV5</name>
<keyword id="KW-0167">Capsid protein</keyword>
<keyword id="KW-1176">Cytoplasmic inwards viral transport</keyword>
<keyword id="KW-1015">Disulfide bond</keyword>
<keyword id="KW-0238">DNA-binding</keyword>
<keyword id="KW-1039">Host endosome</keyword>
<keyword id="KW-1040">Host Golgi apparatus</keyword>
<keyword id="KW-1048">Host nucleus</keyword>
<keyword id="KW-0945">Host-virus interaction</keyword>
<keyword id="KW-0426">Late protein</keyword>
<keyword id="KW-1177">Microtubular inwards viral transport</keyword>
<keyword id="KW-0597">Phosphoprotein</keyword>
<keyword id="KW-1185">Reference proteome</keyword>
<keyword id="KW-1163">Viral penetration into host nucleus</keyword>
<keyword id="KW-0946">Virion</keyword>
<keyword id="KW-1160">Virus entry into host cell</keyword>
<comment type="function">
    <text evidence="1">Minor protein of the capsid that localizes along the inner surface of the virion, within the central cavities beneath the L1 pentamers. Plays a role in capsid stabilization through interaction with the major capsid protein L1. Once the virion enters the host cell, L2 escorts the genomic DNA into the nucleus by promoting escape from the endosomal compartments and traffic through the host Golgi network. Mechanistically, the C-terminus of L2 possesses a cell-penetrating peptide that protudes from the host endosome, interacts with host cytoplasmic retromer cargo and thereby mediates the capsid delivery to the host trans-Golgi network. Plays a role through its interaction with host dynein in the intracellular microtubule-dependent transport of viral capsid toward the nucleus. Mediates the viral genome import into the nucleus through binding to host importins. Once within the nucleus, L2 localizes viral genomes to host PML bodies in order to activate early gene expression for establishment of infection. Later on, promotes late gene expression by interacting with the viral E2 protein and by inhibiting its transcriptional activation functions. During virion assembly, encapsidates the genome by direct interaction with the viral DNA.</text>
</comment>
<comment type="subunit">
    <text evidence="1">Interacts with major capsid protein L1. Interacts with E2; this interaction inhibits E2 transcriptional activity but not the DNA replication function E2. Interacts with host GADD45GIP1. Interacts with host HSPA8; this interaction is required for L2 nuclear translocation. Interacts with host importins KPNB2 and KPNB3. Forms a complex with importin alpha2-beta1 heterodimers via interaction with the importin alpha2 adapter. Interacts with host DYNLT1; this interaction is essential for virus intracellular transport during entry. Interacts (via C-terminus) with host retromer subunits VPS35 and VPS29.</text>
</comment>
<comment type="subcellular location">
    <subcellularLocation>
        <location evidence="1">Virion</location>
    </subcellularLocation>
    <subcellularLocation>
        <location evidence="1">Host nucleus</location>
    </subcellularLocation>
    <subcellularLocation>
        <location evidence="1">Host early endosome</location>
    </subcellularLocation>
    <subcellularLocation>
        <location evidence="1">Host Golgi apparatus</location>
    </subcellularLocation>
</comment>
<comment type="PTM">
    <text evidence="1">Highly phosphorylated.</text>
</comment>
<comment type="similarity">
    <text evidence="1">Belongs to the papillomaviridae L2 protein family.</text>
</comment>
<organismHost>
    <name type="scientific">Bos taurus</name>
    <name type="common">Bovine</name>
    <dbReference type="NCBI Taxonomy" id="9913"/>
</organismHost>
<reference key="1">
    <citation type="journal article" date="2002" name="J. Virol.">
        <title>Lack of canonical E6 and E7 open reading frames in bird papillomaviruses: Fringilla coelebs papillomavirus and Psittacus erithacus timneh papillomavirus.</title>
        <authorList>
            <person name="Terai M."/>
            <person name="DeSalle R."/>
            <person name="Burk R.D."/>
        </authorList>
    </citation>
    <scope>NUCLEOTIDE SEQUENCE [GENOMIC DNA]</scope>
</reference>
<reference key="2">
    <citation type="submission" date="2004-01" db="EMBL/GenBank/DDBJ databases">
        <title>Sequencing of the complete genomes of BPV 3, BPV 5 and BPV 6.</title>
        <authorList>
            <person name="Delius H."/>
            <person name="de Villiers E.M."/>
        </authorList>
    </citation>
    <scope>NUCLEOTIDE SEQUENCE [GENOMIC DNA]</scope>
</reference>
<protein>
    <recommendedName>
        <fullName evidence="1">Minor capsid protein L2</fullName>
    </recommendedName>
</protein>
<proteinExistence type="inferred from homology"/>
<evidence type="ECO:0000255" key="1">
    <source>
        <dbReference type="HAMAP-Rule" id="MF_04003"/>
    </source>
</evidence>
<evidence type="ECO:0000256" key="2">
    <source>
        <dbReference type="SAM" id="MobiDB-lite"/>
    </source>
</evidence>
<feature type="chain" id="PRO_0000133564" description="Minor capsid protein L2">
    <location>
        <begin position="1"/>
        <end position="518"/>
    </location>
</feature>
<feature type="region of interest" description="Disordered" evidence="2">
    <location>
        <begin position="68"/>
        <end position="100"/>
    </location>
</feature>
<feature type="short sequence motif" description="Nuclear localization signal" evidence="1">
    <location>
        <begin position="2"/>
        <end position="11"/>
    </location>
</feature>
<feature type="short sequence motif" description="Nuclear localization signal" evidence="1">
    <location>
        <begin position="511"/>
        <end position="517"/>
    </location>
</feature>
<feature type="disulfide bond" evidence="1">
    <location>
        <begin position="20"/>
        <end position="25"/>
    </location>
</feature>
<organism>
    <name type="scientific">Bovine papillomavirus type 5</name>
    <dbReference type="NCBI Taxonomy" id="2491661"/>
    <lineage>
        <taxon>Viruses</taxon>
        <taxon>Monodnaviria</taxon>
        <taxon>Shotokuvirae</taxon>
        <taxon>Cossaviricota</taxon>
        <taxon>Papovaviricetes</taxon>
        <taxon>Zurhausenvirales</taxon>
        <taxon>Papillomaviridae</taxon>
        <taxon>Firstpapillomavirinae</taxon>
        <taxon>Epsilonpapillomavirus</taxon>
        <taxon>Epsilonpapillomavirus 1</taxon>
    </lineage>
</organism>
<gene>
    <name evidence="1" type="primary">L2</name>
</gene>
<dbReference type="EMBL" id="AF457465">
    <property type="protein sequence ID" value="AAN09928.1"/>
    <property type="molecule type" value="Genomic_DNA"/>
</dbReference>
<dbReference type="EMBL" id="AJ620206">
    <property type="protein sequence ID" value="CAF05675.1"/>
    <property type="molecule type" value="Genomic_DNA"/>
</dbReference>
<dbReference type="RefSeq" id="NP_694434.1">
    <property type="nucleotide sequence ID" value="NC_004195.1"/>
</dbReference>
<dbReference type="GeneID" id="955405"/>
<dbReference type="KEGG" id="vg:955405"/>
<dbReference type="Proteomes" id="UP000008785">
    <property type="component" value="Genome"/>
</dbReference>
<dbReference type="Proteomes" id="UP000185273">
    <property type="component" value="Genome"/>
</dbReference>
<dbReference type="GO" id="GO:0043657">
    <property type="term" value="C:host cell"/>
    <property type="evidence" value="ECO:0007669"/>
    <property type="project" value="GOC"/>
</dbReference>
<dbReference type="GO" id="GO:0044174">
    <property type="term" value="C:host cell endosome"/>
    <property type="evidence" value="ECO:0007669"/>
    <property type="project" value="UniProtKB-KW"/>
</dbReference>
<dbReference type="GO" id="GO:0044177">
    <property type="term" value="C:host cell Golgi apparatus"/>
    <property type="evidence" value="ECO:0007669"/>
    <property type="project" value="UniProtKB-SubCell"/>
</dbReference>
<dbReference type="GO" id="GO:0042025">
    <property type="term" value="C:host cell nucleus"/>
    <property type="evidence" value="ECO:0007669"/>
    <property type="project" value="UniProtKB-SubCell"/>
</dbReference>
<dbReference type="GO" id="GO:0019028">
    <property type="term" value="C:viral capsid"/>
    <property type="evidence" value="ECO:0007669"/>
    <property type="project" value="UniProtKB-UniRule"/>
</dbReference>
<dbReference type="GO" id="GO:0003677">
    <property type="term" value="F:DNA binding"/>
    <property type="evidence" value="ECO:0007669"/>
    <property type="project" value="UniProtKB-UniRule"/>
</dbReference>
<dbReference type="GO" id="GO:0005198">
    <property type="term" value="F:structural molecule activity"/>
    <property type="evidence" value="ECO:0007669"/>
    <property type="project" value="UniProtKB-UniRule"/>
</dbReference>
<dbReference type="GO" id="GO:0075521">
    <property type="term" value="P:microtubule-dependent intracellular transport of viral material towards nucleus"/>
    <property type="evidence" value="ECO:0007669"/>
    <property type="project" value="UniProtKB-UniRule"/>
</dbReference>
<dbReference type="GO" id="GO:0046718">
    <property type="term" value="P:symbiont entry into host cell"/>
    <property type="evidence" value="ECO:0007669"/>
    <property type="project" value="UniProtKB-KW"/>
</dbReference>
<dbReference type="GO" id="GO:0075732">
    <property type="term" value="P:viral penetration into host nucleus"/>
    <property type="evidence" value="ECO:0007669"/>
    <property type="project" value="UniProtKB-KW"/>
</dbReference>
<dbReference type="HAMAP" id="MF_04003">
    <property type="entry name" value="PPV_L2"/>
    <property type="match status" value="1"/>
</dbReference>
<dbReference type="InterPro" id="IPR000784">
    <property type="entry name" value="Late_L2"/>
</dbReference>
<dbReference type="Pfam" id="PF00513">
    <property type="entry name" value="Late_protein_L2"/>
    <property type="match status" value="1"/>
</dbReference>
<sequence>MAVRLRRVKRANPYDLYRTCATGDCPQDVKDRFEHNTIADKILKWGSAGVFLGGLGIGSTQARPGLGTYSPLGRGGVTGRIPVRGPGSTRPLGRPFSSGPIDTIGAGVRTSVETSVTVPDVVAVLPESPAVITPDSMPVDPGVGGLDISAEIIEEPSLTFVEPHGPEDVAVLDVNPAEHDRSVYLSSSTTHHNPSFQGQVTVYTDIGETSETENLLISGSNIGSSRGEEIQMQLFSGPKTSTPETDAVTKVRGRANWFSKRYYTQTSVRDPTFIQEPQTYFYGFENPAYEPDPFEDSFDVQLASPSEPVQPELRDITHVSAARTFRGESGRVGISRLGQKSSIQTRSGVTVGGRVHFRYSLSTIEDAIEDAGEIELQVTNGSQGPSGSLQHTAETILSEGHDAYVDVDMDSVGSLYSDIDLIDEHSETPHGILVFHDEAETDVVPVIDVSYVRKPLSTIPGSDLWPTNINIQNGPVDVDLQDSILPGIIITDSGVDGTYFLNTYLHPSLHKRKKRRFS</sequence>